<comment type="function">
    <text evidence="1">An essential GTPase which binds GTP, GDP and possibly (p)ppGpp with moderate affinity, with high nucleotide exchange rates and a fairly low GTP hydrolysis rate. Plays a role in control of the cell cycle, stress response, ribosome biogenesis and in those bacteria that undergo differentiation, in morphogenesis control.</text>
</comment>
<comment type="cofactor">
    <cofactor evidence="1">
        <name>Mg(2+)</name>
        <dbReference type="ChEBI" id="CHEBI:18420"/>
    </cofactor>
</comment>
<comment type="subunit">
    <text evidence="1">Monomer.</text>
</comment>
<comment type="subcellular location">
    <subcellularLocation>
        <location evidence="1">Cytoplasm</location>
    </subcellularLocation>
</comment>
<comment type="similarity">
    <text evidence="1">Belongs to the TRAFAC class OBG-HflX-like GTPase superfamily. OBG GTPase family.</text>
</comment>
<protein>
    <recommendedName>
        <fullName evidence="1">GTPase Obg</fullName>
        <ecNumber evidence="1">3.6.5.-</ecNumber>
    </recommendedName>
    <alternativeName>
        <fullName evidence="1">GTP-binding protein Obg</fullName>
    </alternativeName>
</protein>
<gene>
    <name evidence="1" type="primary">obg</name>
    <name type="ordered locus">Geob_1246</name>
</gene>
<organism>
    <name type="scientific">Geotalea daltonii (strain DSM 22248 / JCM 15807 / FRC-32)</name>
    <name type="common">Geobacter daltonii</name>
    <dbReference type="NCBI Taxonomy" id="316067"/>
    <lineage>
        <taxon>Bacteria</taxon>
        <taxon>Pseudomonadati</taxon>
        <taxon>Thermodesulfobacteriota</taxon>
        <taxon>Desulfuromonadia</taxon>
        <taxon>Geobacterales</taxon>
        <taxon>Geobacteraceae</taxon>
        <taxon>Geotalea</taxon>
    </lineage>
</organism>
<feature type="chain" id="PRO_0000385953" description="GTPase Obg">
    <location>
        <begin position="1"/>
        <end position="338"/>
    </location>
</feature>
<feature type="domain" description="Obg" evidence="2">
    <location>
        <begin position="1"/>
        <end position="159"/>
    </location>
</feature>
<feature type="domain" description="OBG-type G" evidence="1">
    <location>
        <begin position="160"/>
        <end position="331"/>
    </location>
</feature>
<feature type="binding site" evidence="1">
    <location>
        <begin position="166"/>
        <end position="173"/>
    </location>
    <ligand>
        <name>GTP</name>
        <dbReference type="ChEBI" id="CHEBI:37565"/>
    </ligand>
</feature>
<feature type="binding site" evidence="1">
    <location>
        <position position="173"/>
    </location>
    <ligand>
        <name>Mg(2+)</name>
        <dbReference type="ChEBI" id="CHEBI:18420"/>
    </ligand>
</feature>
<feature type="binding site" evidence="1">
    <location>
        <begin position="191"/>
        <end position="195"/>
    </location>
    <ligand>
        <name>GTP</name>
        <dbReference type="ChEBI" id="CHEBI:37565"/>
    </ligand>
</feature>
<feature type="binding site" evidence="1">
    <location>
        <position position="193"/>
    </location>
    <ligand>
        <name>Mg(2+)</name>
        <dbReference type="ChEBI" id="CHEBI:18420"/>
    </ligand>
</feature>
<feature type="binding site" evidence="1">
    <location>
        <begin position="213"/>
        <end position="216"/>
    </location>
    <ligand>
        <name>GTP</name>
        <dbReference type="ChEBI" id="CHEBI:37565"/>
    </ligand>
</feature>
<feature type="binding site" evidence="1">
    <location>
        <begin position="283"/>
        <end position="286"/>
    </location>
    <ligand>
        <name>GTP</name>
        <dbReference type="ChEBI" id="CHEBI:37565"/>
    </ligand>
</feature>
<feature type="binding site" evidence="1">
    <location>
        <begin position="312"/>
        <end position="314"/>
    </location>
    <ligand>
        <name>GTP</name>
        <dbReference type="ChEBI" id="CHEBI:37565"/>
    </ligand>
</feature>
<sequence length="338" mass="36837">MSFIDEVKIHVKSGDGGPGCVSFRHEKFIEFGGPDGGDGGKGGNVIVEASRNLSTLLDLRQHPHQKAGSGKNGMGKDRHGAYGKDLRLLLPVGTVIKDAETDEVLADLTEPGQPLVLLKGGRGGQGNARFATATHKAPRFAQPGEPGEERWLRLELKLMADVGLLGMPSVGKSSLITKVSAARPKIAEYHFTTLKPNLGVVAYKNYKSFVMADIPGLIEGAHEGAGLGHRFLKHLERTGHLLHILDISWMPDRDPIREYEAINKELSLFNPELAEKKQTIVINKMDLPVVKENLAKVLPYFQERGLKVFPISAATGEGIPALLDEIARQLWGAAEEEW</sequence>
<proteinExistence type="inferred from homology"/>
<accession>B9M3W3</accession>
<evidence type="ECO:0000255" key="1">
    <source>
        <dbReference type="HAMAP-Rule" id="MF_01454"/>
    </source>
</evidence>
<evidence type="ECO:0000255" key="2">
    <source>
        <dbReference type="PROSITE-ProRule" id="PRU01231"/>
    </source>
</evidence>
<reference key="1">
    <citation type="submission" date="2009-01" db="EMBL/GenBank/DDBJ databases">
        <title>Complete sequence of Geobacter sp. FRC-32.</title>
        <authorList>
            <consortium name="US DOE Joint Genome Institute"/>
            <person name="Lucas S."/>
            <person name="Copeland A."/>
            <person name="Lapidus A."/>
            <person name="Glavina del Rio T."/>
            <person name="Dalin E."/>
            <person name="Tice H."/>
            <person name="Bruce D."/>
            <person name="Goodwin L."/>
            <person name="Pitluck S."/>
            <person name="Saunders E."/>
            <person name="Brettin T."/>
            <person name="Detter J.C."/>
            <person name="Han C."/>
            <person name="Larimer F."/>
            <person name="Land M."/>
            <person name="Hauser L."/>
            <person name="Kyrpides N."/>
            <person name="Ovchinnikova G."/>
            <person name="Kostka J."/>
            <person name="Richardson P."/>
        </authorList>
    </citation>
    <scope>NUCLEOTIDE SEQUENCE [LARGE SCALE GENOMIC DNA]</scope>
    <source>
        <strain>DSM 22248 / JCM 15807 / FRC-32</strain>
    </source>
</reference>
<name>OBG_GEODF</name>
<keyword id="KW-0963">Cytoplasm</keyword>
<keyword id="KW-0342">GTP-binding</keyword>
<keyword id="KW-0378">Hydrolase</keyword>
<keyword id="KW-0460">Magnesium</keyword>
<keyword id="KW-0479">Metal-binding</keyword>
<keyword id="KW-0547">Nucleotide-binding</keyword>
<keyword id="KW-1185">Reference proteome</keyword>
<dbReference type="EC" id="3.6.5.-" evidence="1"/>
<dbReference type="EMBL" id="CP001390">
    <property type="protein sequence ID" value="ACM19606.1"/>
    <property type="molecule type" value="Genomic_DNA"/>
</dbReference>
<dbReference type="RefSeq" id="WP_012646335.1">
    <property type="nucleotide sequence ID" value="NC_011979.1"/>
</dbReference>
<dbReference type="SMR" id="B9M3W3"/>
<dbReference type="STRING" id="316067.Geob_1246"/>
<dbReference type="KEGG" id="geo:Geob_1246"/>
<dbReference type="eggNOG" id="COG0536">
    <property type="taxonomic scope" value="Bacteria"/>
</dbReference>
<dbReference type="HOGENOM" id="CLU_011747_2_0_7"/>
<dbReference type="OrthoDB" id="9807318at2"/>
<dbReference type="Proteomes" id="UP000007721">
    <property type="component" value="Chromosome"/>
</dbReference>
<dbReference type="GO" id="GO:0005737">
    <property type="term" value="C:cytoplasm"/>
    <property type="evidence" value="ECO:0007669"/>
    <property type="project" value="UniProtKB-SubCell"/>
</dbReference>
<dbReference type="GO" id="GO:0005525">
    <property type="term" value="F:GTP binding"/>
    <property type="evidence" value="ECO:0007669"/>
    <property type="project" value="UniProtKB-UniRule"/>
</dbReference>
<dbReference type="GO" id="GO:0003924">
    <property type="term" value="F:GTPase activity"/>
    <property type="evidence" value="ECO:0007669"/>
    <property type="project" value="UniProtKB-UniRule"/>
</dbReference>
<dbReference type="GO" id="GO:0000287">
    <property type="term" value="F:magnesium ion binding"/>
    <property type="evidence" value="ECO:0007669"/>
    <property type="project" value="InterPro"/>
</dbReference>
<dbReference type="GO" id="GO:0042254">
    <property type="term" value="P:ribosome biogenesis"/>
    <property type="evidence" value="ECO:0007669"/>
    <property type="project" value="UniProtKB-UniRule"/>
</dbReference>
<dbReference type="CDD" id="cd01898">
    <property type="entry name" value="Obg"/>
    <property type="match status" value="1"/>
</dbReference>
<dbReference type="FunFam" id="2.70.210.12:FF:000001">
    <property type="entry name" value="GTPase Obg"/>
    <property type="match status" value="1"/>
</dbReference>
<dbReference type="Gene3D" id="2.70.210.12">
    <property type="entry name" value="GTP1/OBG domain"/>
    <property type="match status" value="1"/>
</dbReference>
<dbReference type="Gene3D" id="3.40.50.300">
    <property type="entry name" value="P-loop containing nucleotide triphosphate hydrolases"/>
    <property type="match status" value="1"/>
</dbReference>
<dbReference type="HAMAP" id="MF_01454">
    <property type="entry name" value="GTPase_Obg"/>
    <property type="match status" value="1"/>
</dbReference>
<dbReference type="InterPro" id="IPR031167">
    <property type="entry name" value="G_OBG"/>
</dbReference>
<dbReference type="InterPro" id="IPR006073">
    <property type="entry name" value="GTP-bd"/>
</dbReference>
<dbReference type="InterPro" id="IPR014100">
    <property type="entry name" value="GTP-bd_Obg/CgtA"/>
</dbReference>
<dbReference type="InterPro" id="IPR006074">
    <property type="entry name" value="GTP1-OBG_CS"/>
</dbReference>
<dbReference type="InterPro" id="IPR006169">
    <property type="entry name" value="GTP1_OBG_dom"/>
</dbReference>
<dbReference type="InterPro" id="IPR036726">
    <property type="entry name" value="GTP1_OBG_dom_sf"/>
</dbReference>
<dbReference type="InterPro" id="IPR045086">
    <property type="entry name" value="OBG_GTPase"/>
</dbReference>
<dbReference type="InterPro" id="IPR027417">
    <property type="entry name" value="P-loop_NTPase"/>
</dbReference>
<dbReference type="NCBIfam" id="TIGR02729">
    <property type="entry name" value="Obg_CgtA"/>
    <property type="match status" value="1"/>
</dbReference>
<dbReference type="NCBIfam" id="NF008954">
    <property type="entry name" value="PRK12296.1"/>
    <property type="match status" value="1"/>
</dbReference>
<dbReference type="NCBIfam" id="NF008955">
    <property type="entry name" value="PRK12297.1"/>
    <property type="match status" value="1"/>
</dbReference>
<dbReference type="NCBIfam" id="NF008956">
    <property type="entry name" value="PRK12299.1"/>
    <property type="match status" value="1"/>
</dbReference>
<dbReference type="PANTHER" id="PTHR11702">
    <property type="entry name" value="DEVELOPMENTALLY REGULATED GTP-BINDING PROTEIN-RELATED"/>
    <property type="match status" value="1"/>
</dbReference>
<dbReference type="PANTHER" id="PTHR11702:SF31">
    <property type="entry name" value="MITOCHONDRIAL RIBOSOME-ASSOCIATED GTPASE 2"/>
    <property type="match status" value="1"/>
</dbReference>
<dbReference type="Pfam" id="PF01018">
    <property type="entry name" value="GTP1_OBG"/>
    <property type="match status" value="1"/>
</dbReference>
<dbReference type="Pfam" id="PF01926">
    <property type="entry name" value="MMR_HSR1"/>
    <property type="match status" value="1"/>
</dbReference>
<dbReference type="PIRSF" id="PIRSF002401">
    <property type="entry name" value="GTP_bd_Obg/CgtA"/>
    <property type="match status" value="1"/>
</dbReference>
<dbReference type="PRINTS" id="PR00326">
    <property type="entry name" value="GTP1OBG"/>
</dbReference>
<dbReference type="SUPFAM" id="SSF82051">
    <property type="entry name" value="Obg GTP-binding protein N-terminal domain"/>
    <property type="match status" value="1"/>
</dbReference>
<dbReference type="SUPFAM" id="SSF52540">
    <property type="entry name" value="P-loop containing nucleoside triphosphate hydrolases"/>
    <property type="match status" value="1"/>
</dbReference>
<dbReference type="PROSITE" id="PS51710">
    <property type="entry name" value="G_OBG"/>
    <property type="match status" value="1"/>
</dbReference>
<dbReference type="PROSITE" id="PS00905">
    <property type="entry name" value="GTP1_OBG"/>
    <property type="match status" value="1"/>
</dbReference>
<dbReference type="PROSITE" id="PS51883">
    <property type="entry name" value="OBG"/>
    <property type="match status" value="1"/>
</dbReference>